<comment type="function">
    <text evidence="1">Poorly processive, error-prone DNA polymerase involved in untargeted mutagenesis. Copies undamaged DNA at stalled replication forks, which arise in vivo from mismatched or misaligned primer ends. These misaligned primers can be extended by PolIV. Exhibits no 3'-5' exonuclease (proofreading) activity. May be involved in translesional synthesis, in conjunction with the beta clamp from PolIII.</text>
</comment>
<comment type="catalytic activity">
    <reaction evidence="1">
        <text>DNA(n) + a 2'-deoxyribonucleoside 5'-triphosphate = DNA(n+1) + diphosphate</text>
        <dbReference type="Rhea" id="RHEA:22508"/>
        <dbReference type="Rhea" id="RHEA-COMP:17339"/>
        <dbReference type="Rhea" id="RHEA-COMP:17340"/>
        <dbReference type="ChEBI" id="CHEBI:33019"/>
        <dbReference type="ChEBI" id="CHEBI:61560"/>
        <dbReference type="ChEBI" id="CHEBI:173112"/>
        <dbReference type="EC" id="2.7.7.7"/>
    </reaction>
</comment>
<comment type="cofactor">
    <cofactor evidence="1">
        <name>Mg(2+)</name>
        <dbReference type="ChEBI" id="CHEBI:18420"/>
    </cofactor>
    <text evidence="1">Binds 2 magnesium ions per subunit.</text>
</comment>
<comment type="subunit">
    <text evidence="1">Monomer.</text>
</comment>
<comment type="subcellular location">
    <subcellularLocation>
        <location evidence="1">Cytoplasm</location>
    </subcellularLocation>
</comment>
<comment type="similarity">
    <text evidence="1">Belongs to the DNA polymerase type-Y family.</text>
</comment>
<evidence type="ECO:0000255" key="1">
    <source>
        <dbReference type="HAMAP-Rule" id="MF_01113"/>
    </source>
</evidence>
<feature type="chain" id="PRO_0000173952" description="DNA polymerase IV">
    <location>
        <begin position="1"/>
        <end position="356"/>
    </location>
</feature>
<feature type="domain" description="UmuC" evidence="1">
    <location>
        <begin position="6"/>
        <end position="187"/>
    </location>
</feature>
<feature type="active site" evidence="1">
    <location>
        <position position="106"/>
    </location>
</feature>
<feature type="binding site" evidence="1">
    <location>
        <position position="10"/>
    </location>
    <ligand>
        <name>Mg(2+)</name>
        <dbReference type="ChEBI" id="CHEBI:18420"/>
    </ligand>
</feature>
<feature type="binding site" evidence="1">
    <location>
        <position position="105"/>
    </location>
    <ligand>
        <name>Mg(2+)</name>
        <dbReference type="ChEBI" id="CHEBI:18420"/>
    </ligand>
</feature>
<feature type="site" description="Substrate discrimination" evidence="1">
    <location>
        <position position="15"/>
    </location>
</feature>
<proteinExistence type="inferred from homology"/>
<organism>
    <name type="scientific">Staphylococcus saprophyticus subsp. saprophyticus (strain ATCC 15305 / DSM 20229 / NCIMB 8711 / NCTC 7292 / S-41)</name>
    <dbReference type="NCBI Taxonomy" id="342451"/>
    <lineage>
        <taxon>Bacteria</taxon>
        <taxon>Bacillati</taxon>
        <taxon>Bacillota</taxon>
        <taxon>Bacilli</taxon>
        <taxon>Bacillales</taxon>
        <taxon>Staphylococcaceae</taxon>
        <taxon>Staphylococcus</taxon>
    </lineage>
</organism>
<dbReference type="EC" id="2.7.7.7" evidence="1"/>
<dbReference type="EMBL" id="AP008934">
    <property type="protein sequence ID" value="BAE18041.1"/>
    <property type="molecule type" value="Genomic_DNA"/>
</dbReference>
<dbReference type="RefSeq" id="WP_011302771.1">
    <property type="nucleotide sequence ID" value="NZ_MTGA01000031.1"/>
</dbReference>
<dbReference type="SMR" id="Q49YT9"/>
<dbReference type="GeneID" id="3616799"/>
<dbReference type="KEGG" id="ssp:SSP0896"/>
<dbReference type="PATRIC" id="fig|342451.11.peg.895"/>
<dbReference type="eggNOG" id="COG0389">
    <property type="taxonomic scope" value="Bacteria"/>
</dbReference>
<dbReference type="HOGENOM" id="CLU_012348_1_2_9"/>
<dbReference type="OrthoDB" id="9808813at2"/>
<dbReference type="Proteomes" id="UP000006371">
    <property type="component" value="Chromosome"/>
</dbReference>
<dbReference type="GO" id="GO:0005829">
    <property type="term" value="C:cytosol"/>
    <property type="evidence" value="ECO:0007669"/>
    <property type="project" value="TreeGrafter"/>
</dbReference>
<dbReference type="GO" id="GO:0003684">
    <property type="term" value="F:damaged DNA binding"/>
    <property type="evidence" value="ECO:0007669"/>
    <property type="project" value="InterPro"/>
</dbReference>
<dbReference type="GO" id="GO:0003887">
    <property type="term" value="F:DNA-directed DNA polymerase activity"/>
    <property type="evidence" value="ECO:0007669"/>
    <property type="project" value="UniProtKB-UniRule"/>
</dbReference>
<dbReference type="GO" id="GO:0000287">
    <property type="term" value="F:magnesium ion binding"/>
    <property type="evidence" value="ECO:0007669"/>
    <property type="project" value="UniProtKB-UniRule"/>
</dbReference>
<dbReference type="GO" id="GO:0006261">
    <property type="term" value="P:DNA-templated DNA replication"/>
    <property type="evidence" value="ECO:0007669"/>
    <property type="project" value="UniProtKB-UniRule"/>
</dbReference>
<dbReference type="GO" id="GO:0042276">
    <property type="term" value="P:error-prone translesion synthesis"/>
    <property type="evidence" value="ECO:0007669"/>
    <property type="project" value="TreeGrafter"/>
</dbReference>
<dbReference type="GO" id="GO:0009432">
    <property type="term" value="P:SOS response"/>
    <property type="evidence" value="ECO:0007669"/>
    <property type="project" value="TreeGrafter"/>
</dbReference>
<dbReference type="CDD" id="cd03586">
    <property type="entry name" value="PolY_Pol_IV_kappa"/>
    <property type="match status" value="1"/>
</dbReference>
<dbReference type="FunFam" id="3.30.1490.100:FF:000004">
    <property type="entry name" value="DNA polymerase IV"/>
    <property type="match status" value="1"/>
</dbReference>
<dbReference type="FunFam" id="3.40.1170.60:FF:000001">
    <property type="entry name" value="DNA polymerase IV"/>
    <property type="match status" value="1"/>
</dbReference>
<dbReference type="Gene3D" id="3.30.70.270">
    <property type="match status" value="1"/>
</dbReference>
<dbReference type="Gene3D" id="3.40.1170.60">
    <property type="match status" value="1"/>
</dbReference>
<dbReference type="Gene3D" id="1.10.150.20">
    <property type="entry name" value="5' to 3' exonuclease, C-terminal subdomain"/>
    <property type="match status" value="1"/>
</dbReference>
<dbReference type="Gene3D" id="3.30.1490.100">
    <property type="entry name" value="DNA polymerase, Y-family, little finger domain"/>
    <property type="match status" value="1"/>
</dbReference>
<dbReference type="HAMAP" id="MF_01113">
    <property type="entry name" value="DNApol_IV"/>
    <property type="match status" value="1"/>
</dbReference>
<dbReference type="InterPro" id="IPR043502">
    <property type="entry name" value="DNA/RNA_pol_sf"/>
</dbReference>
<dbReference type="InterPro" id="IPR036775">
    <property type="entry name" value="DNA_pol_Y-fam_lit_finger_sf"/>
</dbReference>
<dbReference type="InterPro" id="IPR017961">
    <property type="entry name" value="DNA_pol_Y-fam_little_finger"/>
</dbReference>
<dbReference type="InterPro" id="IPR050116">
    <property type="entry name" value="DNA_polymerase-Y"/>
</dbReference>
<dbReference type="InterPro" id="IPR022880">
    <property type="entry name" value="DNApol_IV"/>
</dbReference>
<dbReference type="InterPro" id="IPR053848">
    <property type="entry name" value="IMS_HHH_1"/>
</dbReference>
<dbReference type="InterPro" id="IPR043128">
    <property type="entry name" value="Rev_trsase/Diguanyl_cyclase"/>
</dbReference>
<dbReference type="InterPro" id="IPR001126">
    <property type="entry name" value="UmuC"/>
</dbReference>
<dbReference type="NCBIfam" id="NF002677">
    <property type="entry name" value="PRK02406.1"/>
    <property type="match status" value="1"/>
</dbReference>
<dbReference type="NCBIfam" id="NF010731">
    <property type="entry name" value="PRK14133.1"/>
    <property type="match status" value="1"/>
</dbReference>
<dbReference type="PANTHER" id="PTHR11076:SF33">
    <property type="entry name" value="DNA POLYMERASE KAPPA"/>
    <property type="match status" value="1"/>
</dbReference>
<dbReference type="PANTHER" id="PTHR11076">
    <property type="entry name" value="DNA REPAIR POLYMERASE UMUC / TRANSFERASE FAMILY MEMBER"/>
    <property type="match status" value="1"/>
</dbReference>
<dbReference type="Pfam" id="PF00817">
    <property type="entry name" value="IMS"/>
    <property type="match status" value="1"/>
</dbReference>
<dbReference type="Pfam" id="PF11799">
    <property type="entry name" value="IMS_C"/>
    <property type="match status" value="1"/>
</dbReference>
<dbReference type="Pfam" id="PF21999">
    <property type="entry name" value="IMS_HHH_1"/>
    <property type="match status" value="1"/>
</dbReference>
<dbReference type="SUPFAM" id="SSF56672">
    <property type="entry name" value="DNA/RNA polymerases"/>
    <property type="match status" value="1"/>
</dbReference>
<dbReference type="SUPFAM" id="SSF100879">
    <property type="entry name" value="Lesion bypass DNA polymerase (Y-family), little finger domain"/>
    <property type="match status" value="1"/>
</dbReference>
<dbReference type="PROSITE" id="PS50173">
    <property type="entry name" value="UMUC"/>
    <property type="match status" value="1"/>
</dbReference>
<protein>
    <recommendedName>
        <fullName evidence="1">DNA polymerase IV</fullName>
        <shortName evidence="1">Pol IV</shortName>
        <ecNumber evidence="1">2.7.7.7</ecNumber>
    </recommendedName>
</protein>
<reference key="1">
    <citation type="journal article" date="2005" name="Proc. Natl. Acad. Sci. U.S.A.">
        <title>Whole genome sequence of Staphylococcus saprophyticus reveals the pathogenesis of uncomplicated urinary tract infection.</title>
        <authorList>
            <person name="Kuroda M."/>
            <person name="Yamashita A."/>
            <person name="Hirakawa H."/>
            <person name="Kumano M."/>
            <person name="Morikawa K."/>
            <person name="Higashide M."/>
            <person name="Maruyama A."/>
            <person name="Inose Y."/>
            <person name="Matoba K."/>
            <person name="Toh H."/>
            <person name="Kuhara S."/>
            <person name="Hattori M."/>
            <person name="Ohta T."/>
        </authorList>
    </citation>
    <scope>NUCLEOTIDE SEQUENCE [LARGE SCALE GENOMIC DNA]</scope>
    <source>
        <strain>ATCC 15305 / DSM 20229 / NCIMB 8711 / NCTC 7292 / S-41</strain>
    </source>
</reference>
<keyword id="KW-0963">Cytoplasm</keyword>
<keyword id="KW-0227">DNA damage</keyword>
<keyword id="KW-0234">DNA repair</keyword>
<keyword id="KW-0235">DNA replication</keyword>
<keyword id="KW-0238">DNA-binding</keyword>
<keyword id="KW-0239">DNA-directed DNA polymerase</keyword>
<keyword id="KW-0460">Magnesium</keyword>
<keyword id="KW-0479">Metal-binding</keyword>
<keyword id="KW-0515">Mutator protein</keyword>
<keyword id="KW-0548">Nucleotidyltransferase</keyword>
<keyword id="KW-1185">Reference proteome</keyword>
<keyword id="KW-0808">Transferase</keyword>
<gene>
    <name evidence="1" type="primary">dinB</name>
    <name type="ordered locus">SSP0896</name>
</gene>
<name>DPO4_STAS1</name>
<accession>Q49YT9</accession>
<sequence length="356" mass="40416">MSERRIIHVDMDYFFAQVEMRDNPKLKGKPVIVGGKASGRGVVSTASYEARQYGVHSAMPTAQAHKLCPNGYYVTPRFEAYKTASEKIMNIFKSYTEVVEPLSLDEAYLDITHLVRPDLPASRIAQYIRRDIYEATMLTSSAGVSYNKFLAKLASGMNKPNGLTVIDYRNVHDILMGLDIGDFPGVGKASKQKMHQEAIYTGQDLYNQSERDLIRLFGKRGHGLYNKARGIDHNPVKPTRIRKSVGTERTFATDMNDDEEILQKIWELSNKTAERLAKLQKSGKTVTVKIKTFKFESLSKQRSLRDPVRSETDIYNIAYDLYTELKNPETPIRLVGVTVGNLEKATYENMTIYDYI</sequence>